<feature type="chain" id="PRO_1000068542" description="Chemoreceptor glutamine deamidase CheD">
    <location>
        <begin position="1"/>
        <end position="166"/>
    </location>
</feature>
<sequence length="166" mass="17952">MSRAEAAVVKVGIADVQVARYPDKIRTSGLGSCVGLVLYDKDKQTAGLVHVMLPDSGLSKTAELNRAKYADTAVKMTIDMLLKAGCRKFALKAKLAGGAEMFKFKMTNDLMKIGPRNVAAIKEQLSLYNIPVISEDTGGSSGRTIEFEPKSCMLHIRTVKQGETTI</sequence>
<evidence type="ECO:0000250" key="1"/>
<evidence type="ECO:0000255" key="2">
    <source>
        <dbReference type="HAMAP-Rule" id="MF_01440"/>
    </source>
</evidence>
<accession>A7Z4R7</accession>
<comment type="function">
    <text evidence="1">Deamidates glutamine residues to glutamate on methyl-accepting chemotaxis receptors (MCPs). CheD-mediated MCP deamidation is required for productive communication of the conformational signals of the chemoreceptors to the CheA kinase (By similarity).</text>
</comment>
<comment type="catalytic activity">
    <reaction evidence="2">
        <text>L-glutaminyl-[protein] + H2O = L-glutamyl-[protein] + NH4(+)</text>
        <dbReference type="Rhea" id="RHEA:16441"/>
        <dbReference type="Rhea" id="RHEA-COMP:10207"/>
        <dbReference type="Rhea" id="RHEA-COMP:10208"/>
        <dbReference type="ChEBI" id="CHEBI:15377"/>
        <dbReference type="ChEBI" id="CHEBI:28938"/>
        <dbReference type="ChEBI" id="CHEBI:29973"/>
        <dbReference type="ChEBI" id="CHEBI:30011"/>
        <dbReference type="EC" id="3.5.1.44"/>
    </reaction>
</comment>
<comment type="subunit">
    <text evidence="2">Forms a complex with CheC.</text>
</comment>
<comment type="similarity">
    <text evidence="2">Belongs to the CheD family.</text>
</comment>
<dbReference type="EC" id="3.5.1.44" evidence="2"/>
<dbReference type="EMBL" id="CP000560">
    <property type="protein sequence ID" value="ABS73993.1"/>
    <property type="molecule type" value="Genomic_DNA"/>
</dbReference>
<dbReference type="RefSeq" id="WP_003154219.1">
    <property type="nucleotide sequence ID" value="NC_009725.2"/>
</dbReference>
<dbReference type="SMR" id="A7Z4R7"/>
<dbReference type="GeneID" id="93080763"/>
<dbReference type="KEGG" id="bay:RBAM_016300"/>
<dbReference type="HOGENOM" id="CLU_087854_2_0_9"/>
<dbReference type="Proteomes" id="UP000001120">
    <property type="component" value="Chromosome"/>
</dbReference>
<dbReference type="GO" id="GO:0050568">
    <property type="term" value="F:protein-glutamine glutaminase activity"/>
    <property type="evidence" value="ECO:0007669"/>
    <property type="project" value="UniProtKB-UniRule"/>
</dbReference>
<dbReference type="GO" id="GO:0006935">
    <property type="term" value="P:chemotaxis"/>
    <property type="evidence" value="ECO:0007669"/>
    <property type="project" value="UniProtKB-UniRule"/>
</dbReference>
<dbReference type="CDD" id="cd16352">
    <property type="entry name" value="CheD"/>
    <property type="match status" value="1"/>
</dbReference>
<dbReference type="Gene3D" id="3.30.1330.200">
    <property type="match status" value="1"/>
</dbReference>
<dbReference type="HAMAP" id="MF_01440">
    <property type="entry name" value="CheD"/>
    <property type="match status" value="1"/>
</dbReference>
<dbReference type="InterPro" id="IPR038592">
    <property type="entry name" value="CheD-like_sf"/>
</dbReference>
<dbReference type="InterPro" id="IPR005659">
    <property type="entry name" value="Chemorcpt_Glu_NH3ase_CheD"/>
</dbReference>
<dbReference type="InterPro" id="IPR011324">
    <property type="entry name" value="Cytotoxic_necrot_fac-like_cat"/>
</dbReference>
<dbReference type="PANTHER" id="PTHR35147">
    <property type="entry name" value="CHEMORECEPTOR GLUTAMINE DEAMIDASE CHED-RELATED"/>
    <property type="match status" value="1"/>
</dbReference>
<dbReference type="PANTHER" id="PTHR35147:SF1">
    <property type="entry name" value="CHEMORECEPTOR GLUTAMINE DEAMIDASE CHED-RELATED"/>
    <property type="match status" value="1"/>
</dbReference>
<dbReference type="Pfam" id="PF03975">
    <property type="entry name" value="CheD"/>
    <property type="match status" value="1"/>
</dbReference>
<dbReference type="SUPFAM" id="SSF64438">
    <property type="entry name" value="CNF1/YfiH-like putative cysteine hydrolases"/>
    <property type="match status" value="1"/>
</dbReference>
<keyword id="KW-0145">Chemotaxis</keyword>
<keyword id="KW-0378">Hydrolase</keyword>
<name>CHED_BACVZ</name>
<reference key="1">
    <citation type="journal article" date="2007" name="Nat. Biotechnol.">
        <title>Comparative analysis of the complete genome sequence of the plant growth-promoting bacterium Bacillus amyloliquefaciens FZB42.</title>
        <authorList>
            <person name="Chen X.H."/>
            <person name="Koumoutsi A."/>
            <person name="Scholz R."/>
            <person name="Eisenreich A."/>
            <person name="Schneider K."/>
            <person name="Heinemeyer I."/>
            <person name="Morgenstern B."/>
            <person name="Voss B."/>
            <person name="Hess W.R."/>
            <person name="Reva O."/>
            <person name="Junge H."/>
            <person name="Voigt B."/>
            <person name="Jungblut P.R."/>
            <person name="Vater J."/>
            <person name="Suessmuth R."/>
            <person name="Liesegang H."/>
            <person name="Strittmatter A."/>
            <person name="Gottschalk G."/>
            <person name="Borriss R."/>
        </authorList>
    </citation>
    <scope>NUCLEOTIDE SEQUENCE [LARGE SCALE GENOMIC DNA]</scope>
    <source>
        <strain>DSM 23117 / BGSC 10A6 / LMG 26770 / FZB42</strain>
    </source>
</reference>
<proteinExistence type="inferred from homology"/>
<organism>
    <name type="scientific">Bacillus velezensis (strain DSM 23117 / BGSC 10A6 / LMG 26770 / FZB42)</name>
    <name type="common">Bacillus amyloliquefaciens subsp. plantarum</name>
    <dbReference type="NCBI Taxonomy" id="326423"/>
    <lineage>
        <taxon>Bacteria</taxon>
        <taxon>Bacillati</taxon>
        <taxon>Bacillota</taxon>
        <taxon>Bacilli</taxon>
        <taxon>Bacillales</taxon>
        <taxon>Bacillaceae</taxon>
        <taxon>Bacillus</taxon>
        <taxon>Bacillus amyloliquefaciens group</taxon>
    </lineage>
</organism>
<gene>
    <name evidence="2" type="primary">cheD</name>
    <name type="ordered locus">RBAM_016300</name>
</gene>
<protein>
    <recommendedName>
        <fullName evidence="2">Chemoreceptor glutamine deamidase CheD</fullName>
        <ecNumber evidence="2">3.5.1.44</ecNumber>
    </recommendedName>
</protein>